<keyword id="KW-0067">ATP-binding</keyword>
<keyword id="KW-0227">DNA damage</keyword>
<keyword id="KW-0233">DNA recombination</keyword>
<keyword id="KW-0234">DNA repair</keyword>
<keyword id="KW-0436">Ligase</keyword>
<keyword id="KW-0460">Magnesium</keyword>
<keyword id="KW-0479">Metal-binding</keyword>
<keyword id="KW-0547">Nucleotide-binding</keyword>
<keyword id="KW-0539">Nucleus</keyword>
<keyword id="KW-1185">Reference proteome</keyword>
<keyword id="KW-0677">Repeat</keyword>
<dbReference type="EC" id="6.5.1.1" evidence="2"/>
<dbReference type="EMBL" id="AE017351">
    <property type="protein sequence ID" value="AAW46139.2"/>
    <property type="molecule type" value="Genomic_DNA"/>
</dbReference>
<dbReference type="RefSeq" id="XP_567656.1">
    <property type="nucleotide sequence ID" value="XM_567656.1"/>
</dbReference>
<dbReference type="SMR" id="P0CN08"/>
<dbReference type="FunCoup" id="P0CN08">
    <property type="interactions" value="240"/>
</dbReference>
<dbReference type="STRING" id="214684.P0CN08"/>
<dbReference type="PaxDb" id="214684-P0CN08"/>
<dbReference type="eggNOG" id="KOG0966">
    <property type="taxonomic scope" value="Eukaryota"/>
</dbReference>
<dbReference type="HOGENOM" id="CLU_004844_1_0_1"/>
<dbReference type="InParanoid" id="P0CN08"/>
<dbReference type="Proteomes" id="UP000002149">
    <property type="component" value="Chromosome 11"/>
</dbReference>
<dbReference type="GO" id="GO:0032807">
    <property type="term" value="C:DNA ligase IV complex"/>
    <property type="evidence" value="ECO:0000318"/>
    <property type="project" value="GO_Central"/>
</dbReference>
<dbReference type="GO" id="GO:0005524">
    <property type="term" value="F:ATP binding"/>
    <property type="evidence" value="ECO:0000318"/>
    <property type="project" value="GO_Central"/>
</dbReference>
<dbReference type="GO" id="GO:0003677">
    <property type="term" value="F:DNA binding"/>
    <property type="evidence" value="ECO:0000318"/>
    <property type="project" value="GO_Central"/>
</dbReference>
<dbReference type="GO" id="GO:0003910">
    <property type="term" value="F:DNA ligase (ATP) activity"/>
    <property type="evidence" value="ECO:0000250"/>
    <property type="project" value="UniProtKB"/>
</dbReference>
<dbReference type="GO" id="GO:0046872">
    <property type="term" value="F:metal ion binding"/>
    <property type="evidence" value="ECO:0007669"/>
    <property type="project" value="UniProtKB-KW"/>
</dbReference>
<dbReference type="GO" id="GO:0071897">
    <property type="term" value="P:DNA biosynthetic process"/>
    <property type="evidence" value="ECO:0007669"/>
    <property type="project" value="InterPro"/>
</dbReference>
<dbReference type="GO" id="GO:0006310">
    <property type="term" value="P:DNA recombination"/>
    <property type="evidence" value="ECO:0007669"/>
    <property type="project" value="UniProtKB-KW"/>
</dbReference>
<dbReference type="GO" id="GO:0097680">
    <property type="term" value="P:double-strand break repair via classical nonhomologous end joining"/>
    <property type="evidence" value="ECO:0000250"/>
    <property type="project" value="UniProtKB"/>
</dbReference>
<dbReference type="GO" id="GO:0006303">
    <property type="term" value="P:double-strand break repair via nonhomologous end joining"/>
    <property type="evidence" value="ECO:0000318"/>
    <property type="project" value="GO_Central"/>
</dbReference>
<dbReference type="GO" id="GO:0006297">
    <property type="term" value="P:nucleotide-excision repair, DNA gap filling"/>
    <property type="evidence" value="ECO:0000318"/>
    <property type="project" value="GO_Central"/>
</dbReference>
<dbReference type="CDD" id="cd07903">
    <property type="entry name" value="Adenylation_DNA_ligase_IV"/>
    <property type="match status" value="1"/>
</dbReference>
<dbReference type="CDD" id="cd18435">
    <property type="entry name" value="BRCT_BRC1_like_rpt1"/>
    <property type="match status" value="1"/>
</dbReference>
<dbReference type="CDD" id="cd17722">
    <property type="entry name" value="BRCT_DNA_ligase_IV_rpt1"/>
    <property type="match status" value="1"/>
</dbReference>
<dbReference type="CDD" id="cd07968">
    <property type="entry name" value="OBF_DNA_ligase_IV"/>
    <property type="match status" value="1"/>
</dbReference>
<dbReference type="FunFam" id="1.10.3260.10:FF:000012">
    <property type="entry name" value="DNA ligase"/>
    <property type="match status" value="1"/>
</dbReference>
<dbReference type="FunFam" id="3.30.470.30:FF:000033">
    <property type="entry name" value="DNA ligase"/>
    <property type="match status" value="1"/>
</dbReference>
<dbReference type="Gene3D" id="3.40.50.10190">
    <property type="entry name" value="BRCT domain"/>
    <property type="match status" value="2"/>
</dbReference>
<dbReference type="Gene3D" id="1.10.3260.10">
    <property type="entry name" value="DNA ligase, ATP-dependent, N-terminal domain"/>
    <property type="match status" value="1"/>
</dbReference>
<dbReference type="Gene3D" id="3.30.470.30">
    <property type="entry name" value="DNA ligase/mRNA capping enzyme"/>
    <property type="match status" value="1"/>
</dbReference>
<dbReference type="Gene3D" id="2.40.50.140">
    <property type="entry name" value="Nucleic acid-binding proteins"/>
    <property type="match status" value="1"/>
</dbReference>
<dbReference type="InterPro" id="IPR044125">
    <property type="entry name" value="Adenylation_DNA_ligase_IV"/>
</dbReference>
<dbReference type="InterPro" id="IPR001357">
    <property type="entry name" value="BRCT_dom"/>
</dbReference>
<dbReference type="InterPro" id="IPR036420">
    <property type="entry name" value="BRCT_dom_sf"/>
</dbReference>
<dbReference type="InterPro" id="IPR000977">
    <property type="entry name" value="DNA_ligase_ATP-dep"/>
</dbReference>
<dbReference type="InterPro" id="IPR012309">
    <property type="entry name" value="DNA_ligase_ATP-dep_C"/>
</dbReference>
<dbReference type="InterPro" id="IPR012310">
    <property type="entry name" value="DNA_ligase_ATP-dep_cent"/>
</dbReference>
<dbReference type="InterPro" id="IPR016059">
    <property type="entry name" value="DNA_ligase_ATP-dep_CS"/>
</dbReference>
<dbReference type="InterPro" id="IPR012308">
    <property type="entry name" value="DNA_ligase_ATP-dep_N"/>
</dbReference>
<dbReference type="InterPro" id="IPR036599">
    <property type="entry name" value="DNA_ligase_N_sf"/>
</dbReference>
<dbReference type="InterPro" id="IPR029710">
    <property type="entry name" value="LIG4"/>
</dbReference>
<dbReference type="InterPro" id="IPR012340">
    <property type="entry name" value="NA-bd_OB-fold"/>
</dbReference>
<dbReference type="NCBIfam" id="TIGR00574">
    <property type="entry name" value="dnl1"/>
    <property type="match status" value="1"/>
</dbReference>
<dbReference type="PANTHER" id="PTHR45997">
    <property type="entry name" value="DNA LIGASE 4"/>
    <property type="match status" value="1"/>
</dbReference>
<dbReference type="PANTHER" id="PTHR45997:SF1">
    <property type="entry name" value="DNA LIGASE 4"/>
    <property type="match status" value="1"/>
</dbReference>
<dbReference type="Pfam" id="PF16589">
    <property type="entry name" value="BRCT_2"/>
    <property type="match status" value="2"/>
</dbReference>
<dbReference type="Pfam" id="PF04679">
    <property type="entry name" value="DNA_ligase_A_C"/>
    <property type="match status" value="1"/>
</dbReference>
<dbReference type="Pfam" id="PF01068">
    <property type="entry name" value="DNA_ligase_A_M"/>
    <property type="match status" value="1"/>
</dbReference>
<dbReference type="Pfam" id="PF04675">
    <property type="entry name" value="DNA_ligase_A_N"/>
    <property type="match status" value="1"/>
</dbReference>
<dbReference type="SMART" id="SM00292">
    <property type="entry name" value="BRCT"/>
    <property type="match status" value="2"/>
</dbReference>
<dbReference type="SUPFAM" id="SSF52113">
    <property type="entry name" value="BRCT domain"/>
    <property type="match status" value="2"/>
</dbReference>
<dbReference type="SUPFAM" id="SSF56091">
    <property type="entry name" value="DNA ligase/mRNA capping enzyme, catalytic domain"/>
    <property type="match status" value="1"/>
</dbReference>
<dbReference type="SUPFAM" id="SSF50249">
    <property type="entry name" value="Nucleic acid-binding proteins"/>
    <property type="match status" value="1"/>
</dbReference>
<dbReference type="PROSITE" id="PS50172">
    <property type="entry name" value="BRCT"/>
    <property type="match status" value="2"/>
</dbReference>
<dbReference type="PROSITE" id="PS00697">
    <property type="entry name" value="DNA_LIGASE_A1"/>
    <property type="match status" value="1"/>
</dbReference>
<dbReference type="PROSITE" id="PS00333">
    <property type="entry name" value="DNA_LIGASE_A2"/>
    <property type="match status" value="1"/>
</dbReference>
<dbReference type="PROSITE" id="PS50160">
    <property type="entry name" value="DNA_LIGASE_A3"/>
    <property type="match status" value="1"/>
</dbReference>
<accession>P0CN08</accession>
<accession>Q55JS6</accession>
<accession>Q5K9S5</accession>
<organism>
    <name type="scientific">Cryptococcus neoformans var. neoformans serotype D (strain JEC21 / ATCC MYA-565)</name>
    <name type="common">Filobasidiella neoformans</name>
    <dbReference type="NCBI Taxonomy" id="214684"/>
    <lineage>
        <taxon>Eukaryota</taxon>
        <taxon>Fungi</taxon>
        <taxon>Dikarya</taxon>
        <taxon>Basidiomycota</taxon>
        <taxon>Agaricomycotina</taxon>
        <taxon>Tremellomycetes</taxon>
        <taxon>Tremellales</taxon>
        <taxon>Cryptococcaceae</taxon>
        <taxon>Cryptococcus</taxon>
        <taxon>Cryptococcus neoformans species complex</taxon>
    </lineage>
</organism>
<proteinExistence type="inferred from homology"/>
<sequence length="1079" mass="123882">MAVHAPYNHAPPPTQEINGQKPTLAPAITLERPADCINRGQYPAFYIICGYLNRLRADAPHKKYELLTRIFGNWREKVGPDLYPLIRLLLPDKDRERPVYNLKESMLARCYIDILSLEKHSEAAQRLIKWKQPAGNSPNPTGDFAKVCYNEIKARSTVEEGQLSVEAVNMLLDKLAVGKMKQKDYVPILKAINMQCTAEEQEWIIRIILKDLHISIRERGVLSAFHPDAIDLYNVCSDLKRVCWTLYDPGFRLNKNETHLELFHSFLPQLCGRMNDASLENIAKAIGAPKEFIMEEKLDGERIQLHMRGNGAQWFYCSRKAKDYTYLYGAHPGEGSLTRYIATAFQDNVRNVILDGEMMVWDPVVERYLAFGTLKSAALDHFNDETAPRPCFKVFDILFLNDHCLSRKRLSERKRLLRSGKIFKNIENYKGRLEFVDEKRGKNAKDIREYLERVVETKGEGLVVKKTDVIYQTNSRGYDWIKVKPEYSDQMGENLEVLVLGGWWGKGGRSGKISRLLCGLREQAFDDGTVERPSFKTFCSIGSGMSYSDYEWILNKHKKHWRPFDRSNPPPFMKLGPVGLDDKPDVYIEPENSFVIEVKASEIVPAGGYGIGFTLRFPRCKYIYYDKNSRDYALDDESKERDMWTSMSVDDFMDLFSRPKRSYDDSQGPGKRKKRKVIRSKKNHLISNFRGQKLSDADVETSIFSDMTFFIVKGTSDYPKADLEALVHKHGADFTQAQLSDLSAIVISPDQKNPLVRAQIRHGVNVIKPEWVFESIARRTALPFLKEFLVFASEEAQDGRYYNKTLEQYDKVSFVRDRTGGALVDEDGDADVEDEIMDGEDKDEIDVEESRESKNRRMAREDLKEKESNRTLEQKKLQEAWGLRSRASPGDSDSEPEEEMSLKEESDTDSERSRGLRAIYEDEEDGENDSHESDVGVNGDDYRAVPLSGLNDKEEGLMGESPEAMHYDEDRIFYHLAFYIDTAKNAAVNGLESSSPSFDTQERLVKVEKLLIENGGRVARSISDPKLTHIIMDDEDSRRYVELTRKTAMPKRKHIVTPKWVEDCVDEETLLDEDLYKPK</sequence>
<name>DNLI4_CRYNJ</name>
<comment type="function">
    <text evidence="2">DNA ligase involved in DNA non-homologous end joining (NHEJ); required for double-strand break (DSB) repair.</text>
</comment>
<comment type="catalytic activity">
    <reaction evidence="5">
        <text>ATP + (deoxyribonucleotide)n-3'-hydroxyl + 5'-phospho-(deoxyribonucleotide)m = (deoxyribonucleotide)n+m + AMP + diphosphate.</text>
        <dbReference type="EC" id="6.5.1.1"/>
    </reaction>
</comment>
<comment type="cofactor">
    <cofactor evidence="1">
        <name>Mg(2+)</name>
        <dbReference type="ChEBI" id="CHEBI:18420"/>
    </cofactor>
</comment>
<comment type="subcellular location">
    <subcellularLocation>
        <location evidence="2">Nucleus</location>
    </subcellularLocation>
</comment>
<comment type="similarity">
    <text evidence="7">Belongs to the ATP-dependent DNA ligase family.</text>
</comment>
<gene>
    <name type="primary">LIG4</name>
    <name type="ordered locus">CNK00930</name>
</gene>
<reference key="1">
    <citation type="journal article" date="2005" name="Science">
        <title>The genome of the basidiomycetous yeast and human pathogen Cryptococcus neoformans.</title>
        <authorList>
            <person name="Loftus B.J."/>
            <person name="Fung E."/>
            <person name="Roncaglia P."/>
            <person name="Rowley D."/>
            <person name="Amedeo P."/>
            <person name="Bruno D."/>
            <person name="Vamathevan J."/>
            <person name="Miranda M."/>
            <person name="Anderson I.J."/>
            <person name="Fraser J.A."/>
            <person name="Allen J.E."/>
            <person name="Bosdet I.E."/>
            <person name="Brent M.R."/>
            <person name="Chiu R."/>
            <person name="Doering T.L."/>
            <person name="Donlin M.J."/>
            <person name="D'Souza C.A."/>
            <person name="Fox D.S."/>
            <person name="Grinberg V."/>
            <person name="Fu J."/>
            <person name="Fukushima M."/>
            <person name="Haas B.J."/>
            <person name="Huang J.C."/>
            <person name="Janbon G."/>
            <person name="Jones S.J.M."/>
            <person name="Koo H.L."/>
            <person name="Krzywinski M.I."/>
            <person name="Kwon-Chung K.J."/>
            <person name="Lengeler K.B."/>
            <person name="Maiti R."/>
            <person name="Marra M.A."/>
            <person name="Marra R.E."/>
            <person name="Mathewson C.A."/>
            <person name="Mitchell T.G."/>
            <person name="Pertea M."/>
            <person name="Riggs F.R."/>
            <person name="Salzberg S.L."/>
            <person name="Schein J.E."/>
            <person name="Shvartsbeyn A."/>
            <person name="Shin H."/>
            <person name="Shumway M."/>
            <person name="Specht C.A."/>
            <person name="Suh B.B."/>
            <person name="Tenney A."/>
            <person name="Utterback T.R."/>
            <person name="Wickes B.L."/>
            <person name="Wortman J.R."/>
            <person name="Wye N.H."/>
            <person name="Kronstad J.W."/>
            <person name="Lodge J.K."/>
            <person name="Heitman J."/>
            <person name="Davis R.W."/>
            <person name="Fraser C.M."/>
            <person name="Hyman R.W."/>
        </authorList>
    </citation>
    <scope>NUCLEOTIDE SEQUENCE [LARGE SCALE GENOMIC DNA]</scope>
    <source>
        <strain>JEC21 / ATCC MYA-565</strain>
    </source>
</reference>
<evidence type="ECO:0000250" key="1">
    <source>
        <dbReference type="UniProtKB" id="P49917"/>
    </source>
</evidence>
<evidence type="ECO:0000250" key="2">
    <source>
        <dbReference type="UniProtKB" id="Q08387"/>
    </source>
</evidence>
<evidence type="ECO:0000255" key="3"/>
<evidence type="ECO:0000255" key="4">
    <source>
        <dbReference type="PROSITE-ProRule" id="PRU00033"/>
    </source>
</evidence>
<evidence type="ECO:0000255" key="5">
    <source>
        <dbReference type="PROSITE-ProRule" id="PRU10135"/>
    </source>
</evidence>
<evidence type="ECO:0000256" key="6">
    <source>
        <dbReference type="SAM" id="MobiDB-lite"/>
    </source>
</evidence>
<evidence type="ECO:0000305" key="7"/>
<feature type="chain" id="PRO_0000278381" description="DNA ligase 4">
    <location>
        <begin position="1"/>
        <end position="1079"/>
    </location>
</feature>
<feature type="domain" description="BRCT 1" evidence="4">
    <location>
        <begin position="699"/>
        <end position="789"/>
    </location>
</feature>
<feature type="domain" description="BRCT 2" evidence="4">
    <location>
        <begin position="968"/>
        <end position="1078"/>
    </location>
</feature>
<feature type="region of interest" description="Disordered" evidence="6">
    <location>
        <begin position="1"/>
        <end position="20"/>
    </location>
</feature>
<feature type="region of interest" description="Disordered" evidence="6">
    <location>
        <begin position="838"/>
        <end position="942"/>
    </location>
</feature>
<feature type="compositionally biased region" description="Acidic residues" evidence="6">
    <location>
        <begin position="838"/>
        <end position="847"/>
    </location>
</feature>
<feature type="compositionally biased region" description="Basic and acidic residues" evidence="6">
    <location>
        <begin position="848"/>
        <end position="878"/>
    </location>
</feature>
<feature type="compositionally biased region" description="Basic and acidic residues" evidence="6">
    <location>
        <begin position="900"/>
        <end position="914"/>
    </location>
</feature>
<feature type="active site" description="N6-AMP-lysine intermediate" evidence="5">
    <location>
        <position position="297"/>
    </location>
</feature>
<feature type="binding site" evidence="1">
    <location>
        <position position="295"/>
    </location>
    <ligand>
        <name>ATP</name>
        <dbReference type="ChEBI" id="CHEBI:30616"/>
    </ligand>
</feature>
<feature type="binding site" evidence="1">
    <location>
        <position position="297"/>
    </location>
    <ligand>
        <name>ATP</name>
        <dbReference type="ChEBI" id="CHEBI:30616"/>
    </ligand>
</feature>
<feature type="binding site" evidence="1">
    <location>
        <position position="298"/>
    </location>
    <ligand>
        <name>ATP</name>
        <dbReference type="ChEBI" id="CHEBI:30616"/>
    </ligand>
</feature>
<feature type="binding site" evidence="1">
    <location>
        <position position="302"/>
    </location>
    <ligand>
        <name>ATP</name>
        <dbReference type="ChEBI" id="CHEBI:30616"/>
    </ligand>
</feature>
<feature type="binding site" evidence="1">
    <location>
        <position position="357"/>
    </location>
    <ligand>
        <name>ATP</name>
        <dbReference type="ChEBI" id="CHEBI:30616"/>
    </ligand>
</feature>
<feature type="binding site" evidence="3">
    <location>
        <position position="357"/>
    </location>
    <ligand>
        <name>Mg(2+)</name>
        <dbReference type="ChEBI" id="CHEBI:18420"/>
        <label>1</label>
    </ligand>
</feature>
<feature type="binding site" evidence="1">
    <location>
        <position position="395"/>
    </location>
    <ligand>
        <name>ATP</name>
        <dbReference type="ChEBI" id="CHEBI:30616"/>
    </ligand>
</feature>
<feature type="binding site" evidence="1">
    <location>
        <position position="460"/>
    </location>
    <ligand>
        <name>ATP</name>
        <dbReference type="ChEBI" id="CHEBI:30616"/>
    </ligand>
</feature>
<feature type="binding site" evidence="3">
    <location>
        <position position="460"/>
    </location>
    <ligand>
        <name>Mg(2+)</name>
        <dbReference type="ChEBI" id="CHEBI:18420"/>
        <label>2</label>
    </ligand>
</feature>
<feature type="binding site" evidence="1">
    <location>
        <position position="465"/>
    </location>
    <ligand>
        <name>ATP</name>
        <dbReference type="ChEBI" id="CHEBI:30616"/>
    </ligand>
</feature>
<feature type="binding site" evidence="1">
    <location>
        <position position="482"/>
    </location>
    <ligand>
        <name>ATP</name>
        <dbReference type="ChEBI" id="CHEBI:30616"/>
    </ligand>
</feature>
<feature type="binding site" evidence="1">
    <location>
        <position position="484"/>
    </location>
    <ligand>
        <name>ATP</name>
        <dbReference type="ChEBI" id="CHEBI:30616"/>
    </ligand>
</feature>
<protein>
    <recommendedName>
        <fullName>DNA ligase 4</fullName>
        <ecNumber evidence="2">6.5.1.1</ecNumber>
    </recommendedName>
    <alternativeName>
        <fullName>DNA ligase IV</fullName>
    </alternativeName>
    <alternativeName>
        <fullName>Polydeoxyribonucleotide synthase [ATP] 4</fullName>
    </alternativeName>
</protein>